<organism>
    <name type="scientific">Pyrococcus horikoshii (strain ATCC 700860 / DSM 12428 / JCM 9974 / NBRC 100139 / OT-3)</name>
    <dbReference type="NCBI Taxonomy" id="70601"/>
    <lineage>
        <taxon>Archaea</taxon>
        <taxon>Methanobacteriati</taxon>
        <taxon>Methanobacteriota</taxon>
        <taxon>Thermococci</taxon>
        <taxon>Thermococcales</taxon>
        <taxon>Thermococcaceae</taxon>
        <taxon>Pyrococcus</taxon>
    </lineage>
</organism>
<evidence type="ECO:0000305" key="1"/>
<evidence type="ECO:0007829" key="2">
    <source>
        <dbReference type="PDB" id="3U55"/>
    </source>
</evidence>
<dbReference type="EC" id="6.3.2.6"/>
<dbReference type="EMBL" id="BA000001">
    <property type="protein sequence ID" value="BAA29311.1"/>
    <property type="molecule type" value="Genomic_DNA"/>
</dbReference>
<dbReference type="PIR" id="H71247">
    <property type="entry name" value="H71247"/>
</dbReference>
<dbReference type="PDB" id="3U54">
    <property type="method" value="X-ray"/>
    <property type="resolution" value="2.35 A"/>
    <property type="chains" value="A/B=1-238"/>
</dbReference>
<dbReference type="PDB" id="3U55">
    <property type="method" value="X-ray"/>
    <property type="resolution" value="1.90 A"/>
    <property type="chains" value="A=1-238"/>
</dbReference>
<dbReference type="PDB" id="4O7L">
    <property type="method" value="X-ray"/>
    <property type="resolution" value="2.10 A"/>
    <property type="chains" value="A=1-238"/>
</dbReference>
<dbReference type="PDB" id="4O7N">
    <property type="method" value="X-ray"/>
    <property type="resolution" value="2.16 A"/>
    <property type="chains" value="A=1-238"/>
</dbReference>
<dbReference type="PDB" id="4O7R">
    <property type="method" value="X-ray"/>
    <property type="resolution" value="2.35 A"/>
    <property type="chains" value="A=1-238"/>
</dbReference>
<dbReference type="PDB" id="4O7S">
    <property type="method" value="X-ray"/>
    <property type="resolution" value="2.24 A"/>
    <property type="chains" value="A=1-238"/>
</dbReference>
<dbReference type="PDB" id="4O7T">
    <property type="method" value="X-ray"/>
    <property type="resolution" value="2.10 A"/>
    <property type="chains" value="A=1-238"/>
</dbReference>
<dbReference type="PDB" id="4O7V">
    <property type="method" value="X-ray"/>
    <property type="resolution" value="2.30 A"/>
    <property type="chains" value="A=1-238"/>
</dbReference>
<dbReference type="PDB" id="4O7W">
    <property type="method" value="X-ray"/>
    <property type="resolution" value="2.20 A"/>
    <property type="chains" value="A=1-238"/>
</dbReference>
<dbReference type="PDB" id="4O7Y">
    <property type="method" value="X-ray"/>
    <property type="resolution" value="2.00 A"/>
    <property type="chains" value="A=1-238"/>
</dbReference>
<dbReference type="PDB" id="4O7Z">
    <property type="method" value="X-ray"/>
    <property type="resolution" value="2.30 A"/>
    <property type="chains" value="A=1-238"/>
</dbReference>
<dbReference type="PDB" id="4O81">
    <property type="method" value="X-ray"/>
    <property type="resolution" value="2.10 A"/>
    <property type="chains" value="A/B=1-238"/>
</dbReference>
<dbReference type="PDB" id="4O82">
    <property type="method" value="X-ray"/>
    <property type="resolution" value="2.16 A"/>
    <property type="chains" value="A/B=1-238"/>
</dbReference>
<dbReference type="PDB" id="4O83">
    <property type="method" value="X-ray"/>
    <property type="resolution" value="2.05 A"/>
    <property type="chains" value="A/B=1-238"/>
</dbReference>
<dbReference type="PDB" id="4O84">
    <property type="method" value="X-ray"/>
    <property type="resolution" value="2.09 A"/>
    <property type="chains" value="A/B=1-238"/>
</dbReference>
<dbReference type="PDB" id="4O86">
    <property type="method" value="X-ray"/>
    <property type="resolution" value="2.20 A"/>
    <property type="chains" value="A=1-238"/>
</dbReference>
<dbReference type="PDBsum" id="3U54"/>
<dbReference type="PDBsum" id="3U55"/>
<dbReference type="PDBsum" id="4O7L"/>
<dbReference type="PDBsum" id="4O7N"/>
<dbReference type="PDBsum" id="4O7R"/>
<dbReference type="PDBsum" id="4O7S"/>
<dbReference type="PDBsum" id="4O7T"/>
<dbReference type="PDBsum" id="4O7V"/>
<dbReference type="PDBsum" id="4O7W"/>
<dbReference type="PDBsum" id="4O7Y"/>
<dbReference type="PDBsum" id="4O7Z"/>
<dbReference type="PDBsum" id="4O81"/>
<dbReference type="PDBsum" id="4O82"/>
<dbReference type="PDBsum" id="4O83"/>
<dbReference type="PDBsum" id="4O84"/>
<dbReference type="PDBsum" id="4O86"/>
<dbReference type="SMR" id="O57978"/>
<dbReference type="STRING" id="70601.gene:9377155"/>
<dbReference type="EnsemblBacteria" id="BAA29311">
    <property type="protein sequence ID" value="BAA29311"/>
    <property type="gene ID" value="BAA29311"/>
</dbReference>
<dbReference type="KEGG" id="pho:PH0239"/>
<dbReference type="eggNOG" id="arCOG04421">
    <property type="taxonomic scope" value="Archaea"/>
</dbReference>
<dbReference type="BRENDA" id="6.3.2.6">
    <property type="organism ID" value="5244"/>
</dbReference>
<dbReference type="UniPathway" id="UPA00074">
    <property type="reaction ID" value="UER00131"/>
</dbReference>
<dbReference type="EvolutionaryTrace" id="O57978"/>
<dbReference type="Proteomes" id="UP000000752">
    <property type="component" value="Chromosome"/>
</dbReference>
<dbReference type="GO" id="GO:0005524">
    <property type="term" value="F:ATP binding"/>
    <property type="evidence" value="ECO:0007669"/>
    <property type="project" value="UniProtKB-KW"/>
</dbReference>
<dbReference type="GO" id="GO:0004639">
    <property type="term" value="F:phosphoribosylaminoimidazolesuccinocarboxamide synthase activity"/>
    <property type="evidence" value="ECO:0007669"/>
    <property type="project" value="UniProtKB-UniRule"/>
</dbReference>
<dbReference type="GO" id="GO:0006189">
    <property type="term" value="P:'de novo' IMP biosynthetic process"/>
    <property type="evidence" value="ECO:0007669"/>
    <property type="project" value="UniProtKB-UniRule"/>
</dbReference>
<dbReference type="GO" id="GO:0009236">
    <property type="term" value="P:cobalamin biosynthetic process"/>
    <property type="evidence" value="ECO:0007669"/>
    <property type="project" value="InterPro"/>
</dbReference>
<dbReference type="CDD" id="cd01415">
    <property type="entry name" value="SAICAR_synt_PurC"/>
    <property type="match status" value="1"/>
</dbReference>
<dbReference type="FunFam" id="3.30.200.20:FF:000086">
    <property type="entry name" value="Phosphoribosylaminoimidazole-succinocarboxamide synthase"/>
    <property type="match status" value="1"/>
</dbReference>
<dbReference type="FunFam" id="3.30.470.20:FF:000006">
    <property type="entry name" value="Phosphoribosylaminoimidazole-succinocarboxamide synthase"/>
    <property type="match status" value="1"/>
</dbReference>
<dbReference type="Gene3D" id="3.30.470.20">
    <property type="entry name" value="ATP-grasp fold, B domain"/>
    <property type="match status" value="1"/>
</dbReference>
<dbReference type="Gene3D" id="3.30.200.20">
    <property type="entry name" value="Phosphorylase Kinase, domain 1"/>
    <property type="match status" value="1"/>
</dbReference>
<dbReference type="HAMAP" id="MF_00137">
    <property type="entry name" value="SAICAR_synth"/>
    <property type="match status" value="1"/>
</dbReference>
<dbReference type="InterPro" id="IPR028923">
    <property type="entry name" value="SAICAR_synt/ADE2_N"/>
</dbReference>
<dbReference type="InterPro" id="IPR033934">
    <property type="entry name" value="SAICAR_synt_PurC"/>
</dbReference>
<dbReference type="InterPro" id="IPR001636">
    <property type="entry name" value="SAICAR_synth"/>
</dbReference>
<dbReference type="InterPro" id="IPR050089">
    <property type="entry name" value="SAICAR_synthetase"/>
</dbReference>
<dbReference type="InterPro" id="IPR018236">
    <property type="entry name" value="SAICAR_synthetase_CS"/>
</dbReference>
<dbReference type="NCBIfam" id="TIGR00081">
    <property type="entry name" value="purC"/>
    <property type="match status" value="1"/>
</dbReference>
<dbReference type="PANTHER" id="PTHR43599">
    <property type="entry name" value="MULTIFUNCTIONAL PROTEIN ADE2"/>
    <property type="match status" value="1"/>
</dbReference>
<dbReference type="PANTHER" id="PTHR43599:SF3">
    <property type="entry name" value="SI:DKEY-6E2.2"/>
    <property type="match status" value="1"/>
</dbReference>
<dbReference type="Pfam" id="PF01259">
    <property type="entry name" value="SAICAR_synt"/>
    <property type="match status" value="1"/>
</dbReference>
<dbReference type="SUPFAM" id="SSF56104">
    <property type="entry name" value="SAICAR synthase-like"/>
    <property type="match status" value="1"/>
</dbReference>
<dbReference type="PROSITE" id="PS01057">
    <property type="entry name" value="SAICAR_SYNTHETASE_1"/>
    <property type="match status" value="1"/>
</dbReference>
<dbReference type="PROSITE" id="PS01058">
    <property type="entry name" value="SAICAR_SYNTHETASE_2"/>
    <property type="match status" value="1"/>
</dbReference>
<proteinExistence type="evidence at protein level"/>
<feature type="chain" id="PRO_0000100916" description="Phosphoribosylaminoimidazole-succinocarboxamide synthase">
    <location>
        <begin position="1"/>
        <end position="238"/>
    </location>
</feature>
<feature type="strand" evidence="2">
    <location>
        <begin position="13"/>
        <end position="17"/>
    </location>
</feature>
<feature type="strand" evidence="2">
    <location>
        <begin position="19"/>
        <end position="27"/>
    </location>
</feature>
<feature type="strand" evidence="2">
    <location>
        <begin position="29"/>
        <end position="33"/>
    </location>
</feature>
<feature type="turn" evidence="2">
    <location>
        <begin position="34"/>
        <end position="37"/>
    </location>
</feature>
<feature type="strand" evidence="2">
    <location>
        <begin position="38"/>
        <end position="41"/>
    </location>
</feature>
<feature type="helix" evidence="2">
    <location>
        <begin position="45"/>
        <end position="62"/>
    </location>
</feature>
<feature type="strand" evidence="2">
    <location>
        <begin position="67"/>
        <end position="72"/>
    </location>
</feature>
<feature type="strand" evidence="2">
    <location>
        <begin position="77"/>
        <end position="81"/>
    </location>
</feature>
<feature type="strand" evidence="2">
    <location>
        <begin position="87"/>
        <end position="95"/>
    </location>
</feature>
<feature type="helix" evidence="2">
    <location>
        <begin position="98"/>
        <end position="102"/>
    </location>
</feature>
<feature type="strand" evidence="2">
    <location>
        <begin position="111"/>
        <end position="121"/>
    </location>
</feature>
<feature type="turn" evidence="2">
    <location>
        <begin position="124"/>
        <end position="127"/>
    </location>
</feature>
<feature type="helix" evidence="2">
    <location>
        <begin position="133"/>
        <end position="138"/>
    </location>
</feature>
<feature type="helix" evidence="2">
    <location>
        <begin position="143"/>
        <end position="165"/>
    </location>
</feature>
<feature type="turn" evidence="2">
    <location>
        <begin position="166"/>
        <end position="168"/>
    </location>
</feature>
<feature type="strand" evidence="2">
    <location>
        <begin position="169"/>
        <end position="176"/>
    </location>
</feature>
<feature type="strand" evidence="2">
    <location>
        <begin position="178"/>
        <end position="180"/>
    </location>
</feature>
<feature type="strand" evidence="2">
    <location>
        <begin position="186"/>
        <end position="188"/>
    </location>
</feature>
<feature type="turn" evidence="2">
    <location>
        <begin position="194"/>
        <end position="196"/>
    </location>
</feature>
<feature type="strand" evidence="2">
    <location>
        <begin position="197"/>
        <end position="201"/>
    </location>
</feature>
<feature type="turn" evidence="2">
    <location>
        <begin position="202"/>
        <end position="204"/>
    </location>
</feature>
<feature type="helix" evidence="2">
    <location>
        <begin position="211"/>
        <end position="214"/>
    </location>
</feature>
<feature type="helix" evidence="2">
    <location>
        <begin position="220"/>
        <end position="232"/>
    </location>
</feature>
<protein>
    <recommendedName>
        <fullName>Phosphoribosylaminoimidazole-succinocarboxamide synthase</fullName>
        <ecNumber>6.3.2.6</ecNumber>
    </recommendedName>
    <alternativeName>
        <fullName>SAICAR synthetase</fullName>
    </alternativeName>
</protein>
<accession>O57978</accession>
<keyword id="KW-0002">3D-structure</keyword>
<keyword id="KW-0067">ATP-binding</keyword>
<keyword id="KW-0436">Ligase</keyword>
<keyword id="KW-0547">Nucleotide-binding</keyword>
<keyword id="KW-0658">Purine biosynthesis</keyword>
<name>PUR7_PYRHO</name>
<reference key="1">
    <citation type="journal article" date="1998" name="DNA Res.">
        <title>Complete sequence and gene organization of the genome of a hyper-thermophilic archaebacterium, Pyrococcus horikoshii OT3.</title>
        <authorList>
            <person name="Kawarabayasi Y."/>
            <person name="Sawada M."/>
            <person name="Horikawa H."/>
            <person name="Haikawa Y."/>
            <person name="Hino Y."/>
            <person name="Yamamoto S."/>
            <person name="Sekine M."/>
            <person name="Baba S."/>
            <person name="Kosugi H."/>
            <person name="Hosoyama A."/>
            <person name="Nagai Y."/>
            <person name="Sakai M."/>
            <person name="Ogura K."/>
            <person name="Otsuka R."/>
            <person name="Nakazawa H."/>
            <person name="Takamiya M."/>
            <person name="Ohfuku Y."/>
            <person name="Funahashi T."/>
            <person name="Tanaka T."/>
            <person name="Kudoh Y."/>
            <person name="Yamazaki J."/>
            <person name="Kushida N."/>
            <person name="Oguchi A."/>
            <person name="Aoki K."/>
            <person name="Yoshizawa T."/>
            <person name="Nakamura Y."/>
            <person name="Robb F.T."/>
            <person name="Horikoshi K."/>
            <person name="Masuchi Y."/>
            <person name="Shizuya H."/>
            <person name="Kikuchi H."/>
        </authorList>
    </citation>
    <scope>NUCLEOTIDE SEQUENCE [LARGE SCALE GENOMIC DNA]</scope>
    <source>
        <strain>ATCC 700860 / DSM 12428 / JCM 9974 / NBRC 100139 / OT-3</strain>
    </source>
</reference>
<comment type="catalytic activity">
    <reaction>
        <text>5-amino-1-(5-phospho-D-ribosyl)imidazole-4-carboxylate + L-aspartate + ATP = (2S)-2-[5-amino-1-(5-phospho-beta-D-ribosyl)imidazole-4-carboxamido]succinate + ADP + phosphate + 2 H(+)</text>
        <dbReference type="Rhea" id="RHEA:22628"/>
        <dbReference type="ChEBI" id="CHEBI:15378"/>
        <dbReference type="ChEBI" id="CHEBI:29991"/>
        <dbReference type="ChEBI" id="CHEBI:30616"/>
        <dbReference type="ChEBI" id="CHEBI:43474"/>
        <dbReference type="ChEBI" id="CHEBI:58443"/>
        <dbReference type="ChEBI" id="CHEBI:77657"/>
        <dbReference type="ChEBI" id="CHEBI:456216"/>
        <dbReference type="EC" id="6.3.2.6"/>
    </reaction>
</comment>
<comment type="pathway">
    <text>Purine metabolism; IMP biosynthesis via de novo pathway; 5-amino-1-(5-phospho-D-ribosyl)imidazole-4-carboxamide from 5-amino-1-(5-phospho-D-ribosyl)imidazole-4-carboxylate: step 1/2.</text>
</comment>
<comment type="similarity">
    <text evidence="1">Belongs to the SAICAR synthetase family.</text>
</comment>
<sequence>MVKLMEVYEGKAKKMIPIDDDKLIMEFKDDATAFDGTKKARFKGKGWLNAQLSVIFFKLLEEHGIKTHFIGVAGGNRLIVEKLDMYPLEVVVRNVVAGSLKKRLPLPEGYELPEPIVELYYKNDELHDPMINYYHAKVLGISLDEIKKIEEIALKVNEILKDYLAKKGIILVDFKLEFGKDKNGDIVLADEISPDTCRFWDAKTKRSLDKDVFRFDKGDLIEAYKEIYERITGEKPEF</sequence>
<gene>
    <name type="primary">purC</name>
    <name type="ordered locus">PH0239</name>
</gene>